<sequence length="426" mass="47258">MKHLTEMVRQHKAGKTNGIYAVCSAHPLVLEAAIRYASANQTPLLIEATSNQVDQFGGYTGMTPADFRGFVCQLADSLNFPQDALILGGDHLGPNRWQNLPAAQAMANADDLIKSYVAAGFKKIHLDCSMSCQDDPIPLTDDIVAERAARLAKVAEETCLEHFGEADLEYVIGTEVPVPGGAHETLSELAVTTPDAARATLEAHRHAFEKQGLNAIWPRIIALVVQPGVEFDHTNVIDYQPAKATXLSQMXENYETLIFEAHSTDYQTPQSLRQLVIDHFAILKVGPALTFALREALFSLAAIEEELVPAKACSGLRQVLENVMLDRPEYWQSHYHGDGNARRLARGYSYSDRVRYYWPDSQIDDAFAHLVRNLADSPIPLPLISQYLPLQYVKVRSGELQPTPRELIINHIQDILAQYHTACEGQ</sequence>
<keyword id="KW-1185">Reference proteome</keyword>
<evidence type="ECO:0000255" key="1">
    <source>
        <dbReference type="HAMAP-Rule" id="MF_01295"/>
    </source>
</evidence>
<proteinExistence type="inferred from homology"/>
<gene>
    <name evidence="1" type="primary">kbaZ</name>
    <name type="synonym">agaZ</name>
    <name type="ordered locus">c3887</name>
</gene>
<feature type="chain" id="PRO_0000372537" description="D-tagatose-1,6-bisphosphate aldolase subunit KbaZ">
    <location>
        <begin position="1"/>
        <end position="426"/>
    </location>
</feature>
<organism>
    <name type="scientific">Escherichia coli O6:H1 (strain CFT073 / ATCC 700928 / UPEC)</name>
    <dbReference type="NCBI Taxonomy" id="199310"/>
    <lineage>
        <taxon>Bacteria</taxon>
        <taxon>Pseudomonadati</taxon>
        <taxon>Pseudomonadota</taxon>
        <taxon>Gammaproteobacteria</taxon>
        <taxon>Enterobacterales</taxon>
        <taxon>Enterobacteriaceae</taxon>
        <taxon>Escherichia</taxon>
    </lineage>
</organism>
<comment type="function">
    <text evidence="1">Component of the tagatose-1,6-bisphosphate aldolase KbaYZ that is required for full activity and stability of the Y subunit. Could have a chaperone-like function for the proper and stable folding of KbaY. When expressed alone, KbaZ does not show any aldolase activity.</text>
</comment>
<comment type="pathway">
    <text evidence="1">Carbohydrate metabolism; D-tagatose 6-phosphate degradation; D-glyceraldehyde 3-phosphate and glycerone phosphate from D-tagatose 6-phosphate: step 2/2.</text>
</comment>
<comment type="subunit">
    <text evidence="1">Forms a complex with KbaY.</text>
</comment>
<comment type="similarity">
    <text evidence="1">Belongs to the GatZ/KbaZ family. KbaZ subfamily.</text>
</comment>
<name>KBAZ_ECOL6</name>
<dbReference type="EMBL" id="AE014075">
    <property type="protein sequence ID" value="AAN82328.1"/>
    <property type="molecule type" value="Genomic_DNA"/>
</dbReference>
<dbReference type="RefSeq" id="WP_000681928.1">
    <property type="nucleotide sequence ID" value="NC_004431.1"/>
</dbReference>
<dbReference type="STRING" id="199310.c3887"/>
<dbReference type="KEGG" id="ecc:c3887"/>
<dbReference type="eggNOG" id="COG4573">
    <property type="taxonomic scope" value="Bacteria"/>
</dbReference>
<dbReference type="HOGENOM" id="CLU_053334_0_0_6"/>
<dbReference type="BioCyc" id="ECOL199310:C3887-MONOMER"/>
<dbReference type="UniPathway" id="UPA00704">
    <property type="reaction ID" value="UER00716"/>
</dbReference>
<dbReference type="Proteomes" id="UP000001410">
    <property type="component" value="Chromosome"/>
</dbReference>
<dbReference type="GO" id="GO:0005886">
    <property type="term" value="C:plasma membrane"/>
    <property type="evidence" value="ECO:0007669"/>
    <property type="project" value="TreeGrafter"/>
</dbReference>
<dbReference type="GO" id="GO:0005975">
    <property type="term" value="P:carbohydrate metabolic process"/>
    <property type="evidence" value="ECO:0007669"/>
    <property type="project" value="InterPro"/>
</dbReference>
<dbReference type="GO" id="GO:2001059">
    <property type="term" value="P:D-tagatose 6-phosphate catabolic process"/>
    <property type="evidence" value="ECO:0007669"/>
    <property type="project" value="UniProtKB-UniRule"/>
</dbReference>
<dbReference type="GO" id="GO:0009401">
    <property type="term" value="P:phosphoenolpyruvate-dependent sugar phosphotransferase system"/>
    <property type="evidence" value="ECO:0007669"/>
    <property type="project" value="TreeGrafter"/>
</dbReference>
<dbReference type="Gene3D" id="3.20.20.70">
    <property type="entry name" value="Aldolase class I"/>
    <property type="match status" value="1"/>
</dbReference>
<dbReference type="Gene3D" id="1.10.400.20">
    <property type="entry name" value="putative tagatose 6-phosphate kinase domain like"/>
    <property type="match status" value="1"/>
</dbReference>
<dbReference type="HAMAP" id="MF_01295">
    <property type="entry name" value="Tagatose_aldol_KbaZ"/>
    <property type="match status" value="1"/>
</dbReference>
<dbReference type="InterPro" id="IPR013785">
    <property type="entry name" value="Aldolase_TIM"/>
</dbReference>
<dbReference type="InterPro" id="IPR012062">
    <property type="entry name" value="GatZ/KbaZ-like"/>
</dbReference>
<dbReference type="InterPro" id="IPR050303">
    <property type="entry name" value="GatZ_KbaZ_carbometab"/>
</dbReference>
<dbReference type="InterPro" id="IPR023435">
    <property type="entry name" value="TagBP_ald_KbaZ"/>
</dbReference>
<dbReference type="NCBIfam" id="TIGR02810">
    <property type="entry name" value="agaZ_gatZ"/>
    <property type="match status" value="1"/>
</dbReference>
<dbReference type="NCBIfam" id="NF012002">
    <property type="entry name" value="PRK15458.1"/>
    <property type="match status" value="1"/>
</dbReference>
<dbReference type="PANTHER" id="PTHR32502:SF2">
    <property type="entry name" value="D-TAGATOSE-1,6-BISPHOSPHATE ALDOLASE SUBUNIT KBAZ"/>
    <property type="match status" value="1"/>
</dbReference>
<dbReference type="PANTHER" id="PTHR32502">
    <property type="entry name" value="N-ACETYLGALACTOSAMINE PERMEASE II COMPONENT-RELATED"/>
    <property type="match status" value="1"/>
</dbReference>
<dbReference type="Pfam" id="PF08013">
    <property type="entry name" value="GatZ_KbaZ-like"/>
    <property type="match status" value="1"/>
</dbReference>
<dbReference type="PIRSF" id="PIRSF009264">
    <property type="entry name" value="TagBP_ald_AgaZ"/>
    <property type="match status" value="1"/>
</dbReference>
<dbReference type="SUPFAM" id="SSF51569">
    <property type="entry name" value="Aldolase"/>
    <property type="match status" value="1"/>
</dbReference>
<protein>
    <recommendedName>
        <fullName evidence="1">D-tagatose-1,6-bisphosphate aldolase subunit KbaZ</fullName>
    </recommendedName>
</protein>
<accession>Q8FDB3</accession>
<reference key="1">
    <citation type="journal article" date="2002" name="Proc. Natl. Acad. Sci. U.S.A.">
        <title>Extensive mosaic structure revealed by the complete genome sequence of uropathogenic Escherichia coli.</title>
        <authorList>
            <person name="Welch R.A."/>
            <person name="Burland V."/>
            <person name="Plunkett G. III"/>
            <person name="Redford P."/>
            <person name="Roesch P."/>
            <person name="Rasko D."/>
            <person name="Buckles E.L."/>
            <person name="Liou S.-R."/>
            <person name="Boutin A."/>
            <person name="Hackett J."/>
            <person name="Stroud D."/>
            <person name="Mayhew G.F."/>
            <person name="Rose D.J."/>
            <person name="Zhou S."/>
            <person name="Schwartz D.C."/>
            <person name="Perna N.T."/>
            <person name="Mobley H.L.T."/>
            <person name="Donnenberg M.S."/>
            <person name="Blattner F.R."/>
        </authorList>
    </citation>
    <scope>NUCLEOTIDE SEQUENCE [LARGE SCALE GENOMIC DNA]</scope>
    <source>
        <strain>CFT073 / ATCC 700928 / UPEC</strain>
    </source>
</reference>